<organism>
    <name type="scientific">Southampton virus (strain GI/Human/United Kingdom/Southampton/1991)</name>
    <name type="common">SHV</name>
    <name type="synonym">Hu/NV/SHV/1991/UK</name>
    <dbReference type="NCBI Taxonomy" id="37129"/>
    <lineage>
        <taxon>Viruses</taxon>
        <taxon>Riboviria</taxon>
        <taxon>Orthornavirae</taxon>
        <taxon>Pisuviricota</taxon>
        <taxon>Pisoniviricetes</taxon>
        <taxon>Picornavirales</taxon>
        <taxon>Caliciviridae</taxon>
        <taxon>Norovirus</taxon>
        <taxon>Norwalk virus</taxon>
    </lineage>
</organism>
<reference key="1">
    <citation type="journal article" date="1993" name="Science">
        <title>Sequence and genome organization of a human small round-structured (Norwalk-like) virus.</title>
        <authorList>
            <person name="Lambden P.R."/>
            <person name="Caul E.O."/>
            <person name="Ashley C.R."/>
            <person name="Clarke I.N."/>
        </authorList>
    </citation>
    <scope>NUCLEOTIDE SEQUENCE [GENOMIC RNA]</scope>
</reference>
<reference key="2">
    <citation type="journal article" date="1995" name="Virus Genes">
        <title>A conserved sequence motif at the 5' terminus of the Southampton virus genome is characteristic of the Caliciviridae.</title>
        <authorList>
            <person name="Lambden P.R."/>
            <person name="Liu B."/>
            <person name="Clarke I.N."/>
        </authorList>
    </citation>
    <scope>SEQUENCE REVISION</scope>
</reference>
<reference key="3">
    <citation type="journal article" date="1999" name="J. Gen. Virol.">
        <title>Identification of further proteolytic cleavage sites in the Southampton calicivirus polyprotein by expression of the viral protease in E. coli.</title>
        <authorList>
            <person name="Liu B.L."/>
            <person name="Viljoen G.J."/>
            <person name="Clarke I.N."/>
            <person name="Lambden P.R."/>
        </authorList>
    </citation>
    <scope>PROTEOLYTIC PROCESSING (GENOME POLYPROTEIN)</scope>
    <scope>FUNCTION (3C-LIKE PROTEASE)</scope>
</reference>
<reference key="4">
    <citation type="journal article" date="2001" name="J. Virol.">
        <title>Polypeptide p41 of a Norwalk-like virus is a nucleic acid-independent nucleoside triphosphatase.</title>
        <authorList>
            <person name="Pfister T."/>
            <person name="Wimmer E."/>
        </authorList>
    </citation>
    <scope>FUNCTION (NTPASE)</scope>
    <scope>COFACTOR (NTPASE)</scope>
    <scope>CATALYTIC ACTIVITY (NTPASE)</scope>
</reference>
<reference key="5">
    <citation type="journal article" date="2021" name="Front. Microbiol.">
        <title>Calicivirus Non-structural Proteins: Potential Functions in Replication and Host Cell Manipulation.</title>
        <authorList>
            <person name="Smertina E."/>
            <person name="Hall R.N."/>
            <person name="Urakova N."/>
            <person name="Strive T."/>
            <person name="Frese M."/>
        </authorList>
    </citation>
    <scope>REVIEW</scope>
</reference>
<accession>Q04544</accession>
<organismHost>
    <name type="scientific">Homo sapiens</name>
    <name type="common">Human</name>
    <dbReference type="NCBI Taxonomy" id="9606"/>
</organismHost>
<comment type="function">
    <molecule>NS1-2</molecule>
    <text evidence="2 4">Induces the proliferation of the host smooth ER membranes forming long tubular structures (By similarity). These remodeled membranes probably form the viral factories that contain the replication complex (By similarity). May play a role in viral replication by interacting with host VAPA, a vesicle-associated membrane protein that plays a role in SNARE-mediated vesicle fusion. This interaction may target replication complex to intracellular membranes (By similarity).</text>
</comment>
<comment type="function">
    <molecule>NTPase</molecule>
    <text evidence="2 3 11">Displays NTPase activity, but no helicase activity (PubMed:11160659). Induces the formation of convoluted membranes derived from the host ER (By similarity). These remodeled membranes probably form the viral factories that contain the replication complex (By similarity). Initiates host cell death by targeting the mitochondrial outer membrane, leading to the permeabilization of mitochondria, programmed host cell death and viral egress (By similarity). Probably plays a role in preventing the assembly of host stress granules (By similarity).</text>
</comment>
<comment type="function">
    <molecule>NS4</molecule>
    <text evidence="2">Probable key protein responsible for the formation of membrane alterations by the virus (By similarity). Induces the formation of convoluted membranes derived from the host ER (By similarity). These remodeled membranes probably form the viral factories that contain the replication complex (By similarity). May play a role in targeting replication complex to intracellular membranes.</text>
</comment>
<comment type="function">
    <molecule>Viral genome-linked protein</molecule>
    <text evidence="1 3">Viral genome-linked protein is covalently linked to the 5'-end of the positive-strand, negative-strand genomic RNAs and subgenomic RNA (By similarity). Acts as a genome-linked replication primer (By similarity). May recruit ribosome to viral RNA thereby promoting viral proteins translation (By similarity). Interacts with host translation initiation complex to allow the translation of viral proteins (By similarity). Induces the formation of aggregates of RNA-directed RNA polymerase in the presence of RNA (By similarity). Through its interaction with the viral RNA-directed RNA polymerase, plays a crucial role in enhancing the polymerase activity (By similarity).</text>
</comment>
<comment type="function">
    <molecule>3C-like protease</molecule>
    <text evidence="6 10">Processes the polyprotein. 3CLpro-RdRp is first released by autocleavage, then all other proteins are cleaved. May cleave polyadenylate-binding protein thereby inhibiting cellular translation.</text>
</comment>
<comment type="function">
    <molecule>RNA-directed RNA polymerase</molecule>
    <text evidence="5">Replicates genomic and antigenomic RNA by recognizing replications specific signals. Also transcribes a subgenomic mRNA by initiating RNA synthesis internally on antigenomic RNA. This sgRNA codes for structural proteins. Catalyzes the covalent attachment VPg with viral RNAs (By similarity).</text>
</comment>
<comment type="catalytic activity">
    <molecule>NTPase</molecule>
    <reaction evidence="11">
        <text>a ribonucleoside 5'-triphosphate + H2O = a ribonucleoside 5'-diphosphate + phosphate + H(+)</text>
        <dbReference type="Rhea" id="RHEA:23680"/>
        <dbReference type="ChEBI" id="CHEBI:15377"/>
        <dbReference type="ChEBI" id="CHEBI:15378"/>
        <dbReference type="ChEBI" id="CHEBI:43474"/>
        <dbReference type="ChEBI" id="CHEBI:57930"/>
        <dbReference type="ChEBI" id="CHEBI:61557"/>
        <dbReference type="EC" id="3.6.1.15"/>
    </reaction>
</comment>
<comment type="catalytic activity">
    <molecule>3C-like protease</molecule>
    <reaction evidence="8">
        <text>Endopeptidase with a preference for cleavage when the P1 position is occupied by Glu-|-Xaa and the P1' position is occupied by Gly-|-Yaa.</text>
        <dbReference type="EC" id="3.4.22.66"/>
    </reaction>
</comment>
<comment type="catalytic activity">
    <molecule>RNA-directed RNA polymerase</molecule>
    <reaction evidence="6">
        <text>RNA(n) + a ribonucleoside 5'-triphosphate = RNA(n+1) + diphosphate</text>
        <dbReference type="Rhea" id="RHEA:21248"/>
        <dbReference type="Rhea" id="RHEA-COMP:14527"/>
        <dbReference type="Rhea" id="RHEA-COMP:17342"/>
        <dbReference type="ChEBI" id="CHEBI:33019"/>
        <dbReference type="ChEBI" id="CHEBI:61557"/>
        <dbReference type="ChEBI" id="CHEBI:140395"/>
        <dbReference type="EC" id="2.7.7.48"/>
    </reaction>
</comment>
<comment type="cofactor">
    <molecule>NTPase</molecule>
    <cofactor evidence="13">
        <name>Mg(2+)</name>
        <dbReference type="ChEBI" id="CHEBI:18420"/>
    </cofactor>
</comment>
<comment type="cofactor">
    <molecule>RNA-directed RNA polymerase</molecule>
    <cofactor evidence="3">
        <name>Mg(2+)</name>
        <dbReference type="ChEBI" id="CHEBI:18420"/>
    </cofactor>
    <cofactor evidence="3">
        <name>Mn(2+)</name>
        <dbReference type="ChEBI" id="CHEBI:29035"/>
    </cofactor>
</comment>
<comment type="subunit">
    <molecule>NS1-2</molecule>
    <text evidence="2 4">Homodimer (By similarity). Homooligomer (By similarity). Interacts with NTPase; this interaction increases the proapoptotic activity of the NTPase and is crucial for the formation of the viral replication complex (By similarity). Interacts with NS4; this interaction is crucial for the formation of the viral replication complex (By similarity). Interacts (via N-terminus) with host VAPA (By similarity). Interacts with host MAP1LC3A/LC3; this interaction does not seem to be linked to host autophagy, but rather plays a role in the formation of viral factories (By similarity).</text>
</comment>
<comment type="subunit">
    <molecule>NTPase</molecule>
    <text evidence="2 3">Homooligomer (By similarity). Interacts with NS1-2; this interaction increases the proapoptotic activity of the NTPase and is crucial for the formation of the viral replication complex (By similarity). Interacts with NS4; this interaction increases the proapoptotic activity of the NTPase (By similarity).</text>
</comment>
<comment type="subunit">
    <molecule>3C-like protease</molecule>
    <text evidence="4">Homodimer (By similarity). Monomer; in solution (By similarity).</text>
</comment>
<comment type="subunit">
    <molecule>NS4</molecule>
    <text evidence="2">Interacts with NTPase; this interaction increases the proapoptotic activity of the NTPase (By similarity). Interacts with NS1-2; this interaction is crucial for the formation of the viral replication complex (By similarity).</text>
</comment>
<comment type="subunit">
    <molecule>Viral genome-linked protein</molecule>
    <text evidence="2 3">Monomer (By similarity). Interacts with the RNA-directed RNA polymerase; this interaction induces the multimerization of the RdRp and enhances its activity (By similarity). Interacts with host IEF4G1; this interaction plays a role in translation of viral proteins (By similarity).</text>
</comment>
<comment type="subunit">
    <molecule>RNA-directed RNA polymerase</molecule>
    <text evidence="3">Homohexamer; also forms fibrous hexameric oligomer (By similarity). Interacts with the viral genome-linked protein; this interaction induces the multimerization of the RdRp and enhances its activity (By similarity).</text>
</comment>
<comment type="subcellular location">
    <molecule>NS1-2</molecule>
    <subcellularLocation>
        <location evidence="4">Host Golgi apparatus membrane</location>
    </subcellularLocation>
</comment>
<comment type="subcellular location">
    <molecule>NTPase</molecule>
    <subcellularLocation>
        <location evidence="2">Host endoplasmic reticulum membrane</location>
    </subcellularLocation>
</comment>
<comment type="subcellular location">
    <molecule>NS4</molecule>
    <subcellularLocation>
        <location evidence="2">Host endoplasmic reticulum membrane</location>
    </subcellularLocation>
</comment>
<comment type="domain">
    <molecule>NS1-2</molecule>
    <text evidence="2">Contains a disordered region in the N-terminus, a putative hydrolase in the central part, and probably a membrane-targeting domain in the C-terminus.</text>
</comment>
<comment type="domain">
    <molecule>NTPase</molecule>
    <text evidence="2 3">Contains a four-helix bundle domain (4HB) membrane-disruption domain in the N-terminus (By similarity). The N-terminus is involved in vesicle formation and ER localization (By similarity). Contains a mitochondrial localization signal in the C-terminus (By similarity). The N-terminus is involved in host cell death and viral egress (By similarity).</text>
</comment>
<comment type="domain">
    <molecule>NS4</molecule>
    <text evidence="4">Contains a motif that mimics a di-acidic endoplasmic reticulum export signal.</text>
</comment>
<comment type="PTM">
    <molecule>Genome polyprotein</molecule>
    <text evidence="4 8 10">Specific enzymatic cleavages in vivo yield mature proteins. 3CLpro is first autocatalytically cleaved, then processes the whole polyprotein (By similarity) (PubMed:10073687). NS1/2-3 and NS3-4 sites are cleaved rapidly and NS4-5, NS5-6, and NS6-7 sites are processed subsequently and less efficiently (By similarity).</text>
</comment>
<comment type="PTM">
    <molecule>Viral genome-linked protein</molecule>
    <text evidence="2">VPg is uridylylated by the polymerase and is covalently attached to the 5'-end of the polyadenylated genomic and subgenomic RNAs. This uridylylated form acts as a nucleotide-peptide primer for the polymerase.</text>
</comment>
<dbReference type="EC" id="3.6.1.15" evidence="11"/>
<dbReference type="EC" id="3.4.22.66" evidence="4"/>
<dbReference type="EC" id="2.7.7.48"/>
<dbReference type="EMBL" id="L07418">
    <property type="protein sequence ID" value="AAA92983.1"/>
    <property type="molecule type" value="Genomic_RNA"/>
</dbReference>
<dbReference type="PIR" id="A37491">
    <property type="entry name" value="A37491"/>
</dbReference>
<dbReference type="PDB" id="2IPH">
    <property type="method" value="X-ray"/>
    <property type="resolution" value="1.75 A"/>
    <property type="chains" value="A/B=1100-1280"/>
</dbReference>
<dbReference type="PDBsum" id="2IPH"/>
<dbReference type="SMR" id="Q04544"/>
<dbReference type="IntAct" id="Q04544">
    <property type="interactions" value="2"/>
</dbReference>
<dbReference type="MEROPS" id="C37.001"/>
<dbReference type="BRENDA" id="3.4.22.28">
    <property type="organism ID" value="5774"/>
</dbReference>
<dbReference type="BRENDA" id="3.4.22.66">
    <property type="organism ID" value="5774"/>
</dbReference>
<dbReference type="BRENDA" id="3.6.1.15">
    <property type="organism ID" value="5774"/>
</dbReference>
<dbReference type="EvolutionaryTrace" id="Q04544"/>
<dbReference type="Proteomes" id="UP000007226">
    <property type="component" value="Genome"/>
</dbReference>
<dbReference type="GO" id="GO:0044167">
    <property type="term" value="C:host cell endoplasmic reticulum membrane"/>
    <property type="evidence" value="ECO:0007669"/>
    <property type="project" value="UniProtKB-SubCell"/>
</dbReference>
<dbReference type="GO" id="GO:0044178">
    <property type="term" value="C:host cell Golgi membrane"/>
    <property type="evidence" value="ECO:0007669"/>
    <property type="project" value="UniProtKB-SubCell"/>
</dbReference>
<dbReference type="GO" id="GO:0016020">
    <property type="term" value="C:membrane"/>
    <property type="evidence" value="ECO:0007669"/>
    <property type="project" value="UniProtKB-KW"/>
</dbReference>
<dbReference type="GO" id="GO:0005524">
    <property type="term" value="F:ATP binding"/>
    <property type="evidence" value="ECO:0007669"/>
    <property type="project" value="UniProtKB-KW"/>
</dbReference>
<dbReference type="GO" id="GO:0004197">
    <property type="term" value="F:cysteine-type endopeptidase activity"/>
    <property type="evidence" value="ECO:0007669"/>
    <property type="project" value="InterPro"/>
</dbReference>
<dbReference type="GO" id="GO:0046872">
    <property type="term" value="F:metal ion binding"/>
    <property type="evidence" value="ECO:0007669"/>
    <property type="project" value="UniProtKB-KW"/>
</dbReference>
<dbReference type="GO" id="GO:0017111">
    <property type="term" value="F:ribonucleoside triphosphate phosphatase activity"/>
    <property type="evidence" value="ECO:0007669"/>
    <property type="project" value="UniProtKB-EC"/>
</dbReference>
<dbReference type="GO" id="GO:0003723">
    <property type="term" value="F:RNA binding"/>
    <property type="evidence" value="ECO:0007669"/>
    <property type="project" value="InterPro"/>
</dbReference>
<dbReference type="GO" id="GO:0003724">
    <property type="term" value="F:RNA helicase activity"/>
    <property type="evidence" value="ECO:0007669"/>
    <property type="project" value="InterPro"/>
</dbReference>
<dbReference type="GO" id="GO:0003968">
    <property type="term" value="F:RNA-directed RNA polymerase activity"/>
    <property type="evidence" value="ECO:0007669"/>
    <property type="project" value="UniProtKB-KW"/>
</dbReference>
<dbReference type="GO" id="GO:0006351">
    <property type="term" value="P:DNA-templated transcription"/>
    <property type="evidence" value="ECO:0007669"/>
    <property type="project" value="InterPro"/>
</dbReference>
<dbReference type="GO" id="GO:0006508">
    <property type="term" value="P:proteolysis"/>
    <property type="evidence" value="ECO:0007669"/>
    <property type="project" value="UniProtKB-KW"/>
</dbReference>
<dbReference type="GO" id="GO:0039694">
    <property type="term" value="P:viral RNA genome replication"/>
    <property type="evidence" value="ECO:0007669"/>
    <property type="project" value="InterPro"/>
</dbReference>
<dbReference type="Gene3D" id="1.20.960.20">
    <property type="match status" value="1"/>
</dbReference>
<dbReference type="Gene3D" id="3.30.70.270">
    <property type="match status" value="2"/>
</dbReference>
<dbReference type="Gene3D" id="6.10.20.70">
    <property type="match status" value="1"/>
</dbReference>
<dbReference type="Gene3D" id="6.10.250.3230">
    <property type="match status" value="1"/>
</dbReference>
<dbReference type="Gene3D" id="3.40.50.300">
    <property type="entry name" value="P-loop containing nucleotide triphosphate hydrolases"/>
    <property type="match status" value="1"/>
</dbReference>
<dbReference type="Gene3D" id="2.40.10.10">
    <property type="entry name" value="Trypsin-like serine proteases"/>
    <property type="match status" value="2"/>
</dbReference>
<dbReference type="InterPro" id="IPR043502">
    <property type="entry name" value="DNA/RNA_pol_sf"/>
</dbReference>
<dbReference type="InterPro" id="IPR000605">
    <property type="entry name" value="Helicase_SF3_ssDNA/RNA_vir"/>
</dbReference>
<dbReference type="InterPro" id="IPR014759">
    <property type="entry name" value="Helicase_SF3_ssRNA_vir"/>
</dbReference>
<dbReference type="InterPro" id="IPR001665">
    <property type="entry name" value="Norovirus_pept_C37"/>
</dbReference>
<dbReference type="InterPro" id="IPR027417">
    <property type="entry name" value="P-loop_NTPase"/>
</dbReference>
<dbReference type="InterPro" id="IPR009003">
    <property type="entry name" value="Peptidase_S1_PA"/>
</dbReference>
<dbReference type="InterPro" id="IPR043504">
    <property type="entry name" value="Peptidase_S1_PA_chymotrypsin"/>
</dbReference>
<dbReference type="InterPro" id="IPR043128">
    <property type="entry name" value="Rev_trsase/Diguanyl_cyclase"/>
</dbReference>
<dbReference type="InterPro" id="IPR001205">
    <property type="entry name" value="RNA-dir_pol_C"/>
</dbReference>
<dbReference type="InterPro" id="IPR007094">
    <property type="entry name" value="RNA-dir_pol_PSvirus"/>
</dbReference>
<dbReference type="InterPro" id="IPR013614">
    <property type="entry name" value="Viral_PP_Calicivir_N"/>
</dbReference>
<dbReference type="Pfam" id="PF08405">
    <property type="entry name" value="Calici_PP_N"/>
    <property type="match status" value="1"/>
</dbReference>
<dbReference type="Pfam" id="PF05416">
    <property type="entry name" value="Peptidase_C37"/>
    <property type="match status" value="1"/>
</dbReference>
<dbReference type="Pfam" id="PF00680">
    <property type="entry name" value="RdRP_1"/>
    <property type="match status" value="1"/>
</dbReference>
<dbReference type="Pfam" id="PF00910">
    <property type="entry name" value="RNA_helicase"/>
    <property type="match status" value="1"/>
</dbReference>
<dbReference type="PRINTS" id="PR00917">
    <property type="entry name" value="SRSVCYSPTASE"/>
</dbReference>
<dbReference type="SUPFAM" id="SSF56672">
    <property type="entry name" value="DNA/RNA polymerases"/>
    <property type="match status" value="1"/>
</dbReference>
<dbReference type="SUPFAM" id="SSF52540">
    <property type="entry name" value="P-loop containing nucleoside triphosphate hydrolases"/>
    <property type="match status" value="1"/>
</dbReference>
<dbReference type="SUPFAM" id="SSF50494">
    <property type="entry name" value="Trypsin-like serine proteases"/>
    <property type="match status" value="1"/>
</dbReference>
<dbReference type="PROSITE" id="PS51537">
    <property type="entry name" value="NV_3CL_PRO"/>
    <property type="match status" value="1"/>
</dbReference>
<dbReference type="PROSITE" id="PS50507">
    <property type="entry name" value="RDRP_SSRNA_POS"/>
    <property type="match status" value="1"/>
</dbReference>
<dbReference type="PROSITE" id="PS51218">
    <property type="entry name" value="SF3_HELICASE_2"/>
    <property type="match status" value="1"/>
</dbReference>
<sequence>MMMASKDVVATNVASNNNANNTSATSRFLSRFKGLGGGASPPSPIKIKSTEMALGLIGRTTPEPTGTAGPPPKQQRDRPPRTQEEVQYGMGWSDRPIDQNVKSWEELDTTVKEEILDNHKEWFDAGGLGPCTMPPTYERVKDDSPPGEQVKWSARDGVNIGVERLTTVSGPEWNLCPLPPIDLRNMEPASEPTIGDMIEFYEGHIYHYSIYIGQGKTVGVHSPQAAFSVARVTIQPIAAWWRVCYIPQPKHRLSYDQLKELENEPWPYAAITNNCFEFCCQVMNLEDTWLQRRLVTSGRFHHPTQSWSQQTPEFQQDSKLELVRDAILAAVNGLVSQPFKNFLGKLKPLNVLNILSNCDWTFMGVVEMVILLLELFGVFWNPPDVSNFIASLLPDFHLQGPEDLARDLVPVILGGIGLAIGFTRDKVTKVMKSAVDGLRAATQLGQYGLEIFSLLKKYFFGGDQTERTLKGIEAAVIDMEVLSSTSVTQLVRDKQAAKAYMNILDNEEEKARKLSAKNADPHVISSTNALISRISMARSALAKAQAEMTSRMRPVVIMMCGPPGIGKTKAAEHLAKRLANEIRPGGKVGLVPREAVDHWDGYHGEEVMLWDDYGMTKILDDCNKLQAIADSAPLTLNCDRIENKGMQFVSDAIVITTNAPGPAPVDFVNLGPVCRRVDFLVYCSAPEVEQIRRVSPGDTSALKDCFKLDFSHLKMELAPQGGFDNQGNTPFGKGTMKPTTINRLLIQAVALTMERQDEFQLQGKMYDFDDDRVSAFTTMARDNGLGILSMAGLGKKLRGVTTMEGLKNALKGYKISACTIKWQAKVYSLESDGNSVNIKEERNILTQQQQSVCTASVALTRLRAARAVAYASCIQSAITSILQIAGSALVVNRAVKRMFGTRTATLSLEGPPREHKCRVHMAKAAGKGPIGHDDVVEKYGLCETEEDEEVAHTEIPSATMEGKNKGKNKKGRGRRNNYNAFSRRGLNDEEYEEYKKIREEKGGNYSIQEYLEDRQRYEEELAEVQAGGDGGIGETEMEIRHRVFYKSKSRKHHQEERRQLGLVTGSDIRKRKPIDWTPPKSAWADDEREVDYNEKISFEAPPTLWSRVTKFGSGWGFWVSPTVFITTTHVIPTSAKEFFGEPLTSIAIHRAGEFTLFRFSKKIRPDLTGMILEEGCPEGTVCSVLIKRDSGELLPLAVRMGAIASMRIQGRLVHGQSGMLLTGANAKGMDLGTIPGDCGAPYVYKRANDWVVCGVHAAATKSGNTVVCAVQASEGETTLEGGDKGHYAGHEIIKHGCGPALSTKTKFWKSSPEPLPPGVYEPAYLGGRDPRVTVGPSLQQVLRDQLKPFAEPRGRMPEPGLLEAAVETVTSSLEQVMDTPVPWSYSDACQSLDKTTSSGFPYHRRKNDDWNGTTFVRELGEQAAHANNMYEQAKSMKPMYTGALKDELVKPEKVYQKVKKRLLWGADLGTVVRAARAFGPFCDAIKSHTIKLPIKVGMNSIEDGPLIYAEHSKYKYHFDADYTAWDSTQNRQIMTESFSIMCRLTASPELASVVAQDLLAPSEMDVGDYVIRVKEGLPSGFPCTSQVNSINHWLITLCALSEVTGLSPDVIQSMSYFSFYGDDEIVSTDIEFDPAKLTQVLREYGLRPTRPDKSEGPIIVRKSVDGLVFLRRTISRDAAGFQGRLDRASIERQIYWTRGPNHSDPFETLVPHQQRKVQLISLLGEASLHGEKFYRKISSKVIQEIKTGGLEMYVPGWQAMFRWMRFHDLGLWTGDRNLLPEFVNDDGV</sequence>
<name>POLG_SOUV3</name>
<keyword id="KW-0002">3D-structure</keyword>
<keyword id="KW-0067">ATP-binding</keyword>
<keyword id="KW-0191">Covalent protein-RNA linkage</keyword>
<keyword id="KW-1038">Host endoplasmic reticulum</keyword>
<keyword id="KW-1040">Host Golgi apparatus</keyword>
<keyword id="KW-1043">Host membrane</keyword>
<keyword id="KW-0945">Host-virus interaction</keyword>
<keyword id="KW-0378">Hydrolase</keyword>
<keyword id="KW-0460">Magnesium</keyword>
<keyword id="KW-0472">Membrane</keyword>
<keyword id="KW-0479">Metal-binding</keyword>
<keyword id="KW-0547">Nucleotide-binding</keyword>
<keyword id="KW-0548">Nucleotidyltransferase</keyword>
<keyword id="KW-0597">Phosphoprotein</keyword>
<keyword id="KW-0645">Protease</keyword>
<keyword id="KW-0696">RNA-directed RNA polymerase</keyword>
<keyword id="KW-0788">Thiol protease</keyword>
<keyword id="KW-0808">Transferase</keyword>
<keyword id="KW-0693">Viral RNA replication</keyword>
<protein>
    <recommendedName>
        <fullName>Genome polyprotein</fullName>
    </recommendedName>
    <component>
        <recommendedName>
            <fullName evidence="2">NS1-2</fullName>
        </recommendedName>
        <alternativeName>
            <fullName>NS1.2</fullName>
        </alternativeName>
        <alternativeName>
            <fullName evidence="12">NS1/2</fullName>
        </alternativeName>
        <alternativeName>
            <fullName>Protein p48</fullName>
        </alternativeName>
    </component>
    <component>
        <recommendedName>
            <fullName>NTPase</fullName>
            <ecNumber evidence="11">3.6.1.15</ecNumber>
        </recommendedName>
        <alternativeName>
            <fullName evidence="12">NS3</fullName>
        </alternativeName>
        <alternativeName>
            <fullName>p41</fullName>
        </alternativeName>
    </component>
    <component>
        <recommendedName>
            <fullName evidence="12">NS4</fullName>
        </recommendedName>
        <alternativeName>
            <fullName>Protein p22</fullName>
        </alternativeName>
    </component>
    <component>
        <recommendedName>
            <fullName>Viral genome-linked protein</fullName>
            <shortName>VPg</shortName>
        </recommendedName>
        <alternativeName>
            <fullName evidence="12">NS5</fullName>
        </alternativeName>
    </component>
    <component>
        <recommendedName>
            <fullName>3C-like protease</fullName>
            <shortName>3CLpro</shortName>
            <ecNumber evidence="4">3.4.22.66</ecNumber>
        </recommendedName>
        <alternativeName>
            <fullName>Calicivirin</fullName>
        </alternativeName>
        <alternativeName>
            <fullName evidence="12">NS6</fullName>
        </alternativeName>
    </component>
    <component>
        <recommendedName>
            <fullName>RNA-directed RNA polymerase</fullName>
            <shortName>RdRp</shortName>
            <ecNumber>2.7.7.48</ecNumber>
        </recommendedName>
        <alternativeName>
            <fullName evidence="12">NS7</fullName>
        </alternativeName>
    </component>
</protein>
<evidence type="ECO:0000250" key="1">
    <source>
        <dbReference type="UniProtKB" id="P27409"/>
    </source>
</evidence>
<evidence type="ECO:0000250" key="2">
    <source>
        <dbReference type="UniProtKB" id="P54634"/>
    </source>
</evidence>
<evidence type="ECO:0000250" key="3">
    <source>
        <dbReference type="UniProtKB" id="Q80J95"/>
    </source>
</evidence>
<evidence type="ECO:0000250" key="4">
    <source>
        <dbReference type="UniProtKB" id="Q83883"/>
    </source>
</evidence>
<evidence type="ECO:0000250" key="5">
    <source>
        <dbReference type="UniProtKB" id="Q86119"/>
    </source>
</evidence>
<evidence type="ECO:0000255" key="6">
    <source>
        <dbReference type="PROSITE-ProRule" id="PRU00539"/>
    </source>
</evidence>
<evidence type="ECO:0000255" key="7">
    <source>
        <dbReference type="PROSITE-ProRule" id="PRU00551"/>
    </source>
</evidence>
<evidence type="ECO:0000255" key="8">
    <source>
        <dbReference type="PROSITE-ProRule" id="PRU00870"/>
    </source>
</evidence>
<evidence type="ECO:0000256" key="9">
    <source>
        <dbReference type="SAM" id="MobiDB-lite"/>
    </source>
</evidence>
<evidence type="ECO:0000269" key="10">
    <source>
    </source>
</evidence>
<evidence type="ECO:0000269" key="11">
    <source>
    </source>
</evidence>
<evidence type="ECO:0000305" key="12"/>
<evidence type="ECO:0000305" key="13">
    <source>
    </source>
</evidence>
<evidence type="ECO:0007829" key="14">
    <source>
        <dbReference type="PDB" id="2IPH"/>
    </source>
</evidence>
<gene>
    <name type="ORF">ORF1</name>
</gene>
<feature type="chain" id="PRO_0000342021" description="Genome polyprotein">
    <location>
        <begin position="1"/>
        <end position="1788"/>
    </location>
</feature>
<feature type="chain" id="PRO_0000036935" description="NS1-2">
    <location>
        <begin position="1"/>
        <end position="399"/>
    </location>
</feature>
<feature type="chain" id="PRO_0000036936" description="NTPase">
    <location>
        <begin position="400"/>
        <end position="762"/>
    </location>
</feature>
<feature type="chain" id="PRO_0000036937" description="NS4">
    <location>
        <begin position="763"/>
        <end position="961"/>
    </location>
</feature>
<feature type="chain" id="PRO_0000036938" description="Viral genome-linked protein">
    <location>
        <begin position="962"/>
        <end position="1099"/>
    </location>
</feature>
<feature type="chain" id="PRO_0000036939" description="3C-like protease">
    <location>
        <begin position="1100"/>
        <end position="1280"/>
    </location>
</feature>
<feature type="chain" id="PRO_0000036940" description="RNA-directed RNA polymerase">
    <location>
        <begin position="1281"/>
        <end position="1788"/>
    </location>
</feature>
<feature type="domain" description="SF3 helicase" evidence="7">
    <location>
        <begin position="533"/>
        <end position="698"/>
    </location>
</feature>
<feature type="domain" description="Peptidase C37" evidence="8">
    <location>
        <begin position="1100"/>
        <end position="1280"/>
    </location>
</feature>
<feature type="domain" description="RdRp catalytic" evidence="6">
    <location>
        <begin position="1515"/>
        <end position="1636"/>
    </location>
</feature>
<feature type="region of interest" description="Interaction with host MAP1LC3A/LC3" evidence="2">
    <location>
        <begin position="1"/>
        <end position="184"/>
    </location>
</feature>
<feature type="region of interest" description="Disordered" evidence="9">
    <location>
        <begin position="58"/>
        <end position="86"/>
    </location>
</feature>
<feature type="region of interest" description="Interaction with NTPase" evidence="2">
    <location>
        <begin position="185"/>
        <end position="399"/>
    </location>
</feature>
<feature type="region of interest" description="Interaction with NS4" evidence="2">
    <location>
        <begin position="302"/>
        <end position="399"/>
    </location>
</feature>
<feature type="region of interest" description="Host ER membrane association" evidence="2">
    <location>
        <begin position="319"/>
        <end position="350"/>
    </location>
</feature>
<feature type="region of interest" description="Host ER membrane association" evidence="2">
    <location>
        <begin position="361"/>
        <end position="399"/>
    </location>
</feature>
<feature type="region of interest" description="Interaction with NS1-2 and NS4 and homooligomerization" evidence="2">
    <location>
        <begin position="400"/>
        <end position="575"/>
    </location>
</feature>
<feature type="region of interest" description="Important for mitochondrion targeting" evidence="2">
    <location>
        <begin position="652"/>
        <end position="757"/>
    </location>
</feature>
<feature type="region of interest" description="Functions as endoplasmic reticulum export signal" evidence="4">
    <location>
        <begin position="827"/>
        <end position="833"/>
    </location>
</feature>
<feature type="region of interest" description="Host membrane association" evidence="4">
    <location>
        <begin position="866"/>
        <end position="911"/>
    </location>
</feature>
<feature type="region of interest" description="Disordered" evidence="9">
    <location>
        <begin position="948"/>
        <end position="979"/>
    </location>
</feature>
<feature type="region of interest" description="Acidic" evidence="3">
    <location>
        <begin position="988"/>
        <end position="993"/>
    </location>
</feature>
<feature type="region of interest" description="Interaction with host EIF4G" evidence="2">
    <location>
        <begin position="1083"/>
        <end position="1099"/>
    </location>
</feature>
<feature type="compositionally biased region" description="Low complexity" evidence="9">
    <location>
        <begin position="58"/>
        <end position="68"/>
    </location>
</feature>
<feature type="compositionally biased region" description="Basic and acidic residues" evidence="9">
    <location>
        <begin position="74"/>
        <end position="84"/>
    </location>
</feature>
<feature type="compositionally biased region" description="Basic residues" evidence="9">
    <location>
        <begin position="965"/>
        <end position="975"/>
    </location>
</feature>
<feature type="active site" description="For 3CLpro activity" evidence="8">
    <location>
        <position position="1129"/>
    </location>
</feature>
<feature type="active site" description="For 3CLpro activity" evidence="8">
    <location>
        <position position="1153"/>
    </location>
</feature>
<feature type="active site" description="For 3CLpro activity" evidence="8">
    <location>
        <position position="1238"/>
    </location>
</feature>
<feature type="binding site" evidence="7">
    <location>
        <begin position="561"/>
        <end position="568"/>
    </location>
    <ligand>
        <name>ATP</name>
        <dbReference type="ChEBI" id="CHEBI:30616"/>
    </ligand>
</feature>
<feature type="binding site" evidence="3">
    <location>
        <position position="1519"/>
    </location>
    <ligand>
        <name>Mg(2+)</name>
        <dbReference type="ChEBI" id="CHEBI:18420"/>
        <note>catalytic; for RNA-directed RNA polymerase activity</note>
    </ligand>
</feature>
<feature type="binding site" evidence="3">
    <location>
        <position position="1521"/>
    </location>
    <ligand>
        <name>Mg(2+)</name>
        <dbReference type="ChEBI" id="CHEBI:18420"/>
        <note>catalytic; for RNA-directed RNA polymerase activity</note>
    </ligand>
</feature>
<feature type="binding site" evidence="3">
    <location>
        <position position="1623"/>
    </location>
    <ligand>
        <name>Mg(2+)</name>
        <dbReference type="ChEBI" id="CHEBI:18420"/>
        <note>catalytic; for RNA-directed RNA polymerase activity</note>
    </ligand>
</feature>
<feature type="binding site" evidence="3">
    <location>
        <position position="1624"/>
    </location>
    <ligand>
        <name>Mg(2+)</name>
        <dbReference type="ChEBI" id="CHEBI:18420"/>
        <note>catalytic; for RNA-directed RNA polymerase activity</note>
    </ligand>
</feature>
<feature type="site" description="Cleavage; by 3CLpro">
    <location>
        <begin position="399"/>
        <end position="400"/>
    </location>
</feature>
<feature type="site" description="Cleavage; by 3CLpro">
    <location>
        <begin position="762"/>
        <end position="763"/>
    </location>
</feature>
<feature type="site" description="Cleavage; by 3CLpro">
    <location>
        <begin position="961"/>
        <end position="962"/>
    </location>
</feature>
<feature type="site" description="Cleavage; by 3CLpro">
    <location>
        <begin position="1099"/>
        <end position="1100"/>
    </location>
</feature>
<feature type="site" description="Cleavage; by 3CLpro">
    <location>
        <begin position="1280"/>
        <end position="1281"/>
    </location>
</feature>
<feature type="modified residue" description="O-(5'-phospho-RNA)-tyrosine" evidence="3">
    <location>
        <position position="991"/>
    </location>
</feature>
<feature type="helix" evidence="14">
    <location>
        <begin position="1102"/>
        <end position="1105"/>
    </location>
</feature>
<feature type="strand" evidence="14">
    <location>
        <begin position="1108"/>
        <end position="1111"/>
    </location>
</feature>
<feature type="strand" evidence="14">
    <location>
        <begin position="1114"/>
        <end position="1127"/>
    </location>
</feature>
<feature type="helix" evidence="14">
    <location>
        <begin position="1128"/>
        <end position="1130"/>
    </location>
</feature>
<feature type="strand" evidence="14">
    <location>
        <begin position="1136"/>
        <end position="1138"/>
    </location>
</feature>
<feature type="helix" evidence="14">
    <location>
        <begin position="1143"/>
        <end position="1145"/>
    </location>
</feature>
<feature type="strand" evidence="14">
    <location>
        <begin position="1146"/>
        <end position="1151"/>
    </location>
</feature>
<feature type="strand" evidence="14">
    <location>
        <begin position="1154"/>
        <end position="1161"/>
    </location>
</feature>
<feature type="strand" evidence="14">
    <location>
        <begin position="1181"/>
        <end position="1187"/>
    </location>
</feature>
<feature type="strand" evidence="14">
    <location>
        <begin position="1193"/>
        <end position="1208"/>
    </location>
</feature>
<feature type="strand" evidence="14">
    <location>
        <begin position="1211"/>
        <end position="1220"/>
    </location>
</feature>
<feature type="strand" evidence="14">
    <location>
        <begin position="1222"/>
        <end position="1224"/>
    </location>
</feature>
<feature type="turn" evidence="14">
    <location>
        <begin position="1229"/>
        <end position="1231"/>
    </location>
</feature>
<feature type="strand" evidence="14">
    <location>
        <begin position="1241"/>
        <end position="1246"/>
    </location>
</feature>
<feature type="strand" evidence="14">
    <location>
        <begin position="1249"/>
        <end position="1259"/>
    </location>
</feature>
<feature type="strand" evidence="14">
    <location>
        <begin position="1261"/>
        <end position="1269"/>
    </location>
</feature>
<proteinExistence type="evidence at protein level"/>